<sequence>MCGIWALFGSDDCLSVQCLSAMKIAHRGPDAFRFENVNGYTNCCFGFHRLAVVDPLFGMQPIRVKKYPYLWLCYNGEIYNHKKMQQHFEFEYQTKVDGEIILHLYDKGGIEQTICMLDGVFAFVLLDTATKKVFLGRDTYGVRPLFKAMTEDGFLAVCSEAKGLVTLKHSTTPFLKVEPFLPGHYEVLDLKPNGKVASVEMVKYHHCRDEPLHALYDNVEKLFPGFEIETVKNNLRILFNNAVKKRLMTDRRIGCLLSGGLDSSLVAATLLKQLKEARVQYPLQTFAIGMEDSPDLLAARKVADHIGSEHYEVLFNSEEGIQALDEVIFSLETYDITTVRASVGMYLISKYIRKNTDSVVIFSGEGSDELTQGYIYFHKAPSPEKAEEESERLLRELYLFDVLRADRTTAAHGLELRVPFLDHRFSSYYLSLPPEMRIPKNGIEKHLLRETFEDSNLIPKEILWRPKEAFSDGITSVKNSWFKILQEYVEHQVDDAMMANAAQKFPFNTPKTKEGYYYRQVFERHYPGRADWLSHYWMPKWINATDPSARTLTHYKSAVKA</sequence>
<feature type="initiator methionine" description="Removed" evidence="1">
    <location>
        <position position="1"/>
    </location>
</feature>
<feature type="chain" id="PRO_0000056913" description="Asparagine synthetase [glutamine-hydrolyzing]">
    <location>
        <begin position="2"/>
        <end position="561"/>
    </location>
</feature>
<feature type="domain" description="Glutamine amidotransferase type-2" evidence="3">
    <location>
        <begin position="2"/>
        <end position="191"/>
    </location>
</feature>
<feature type="domain" description="Asparagine synthetase">
    <location>
        <begin position="213"/>
        <end position="536"/>
    </location>
</feature>
<feature type="active site" description="For GATase activity" evidence="1">
    <location>
        <position position="2"/>
    </location>
</feature>
<feature type="binding site" evidence="1">
    <location>
        <begin position="49"/>
        <end position="53"/>
    </location>
    <ligand>
        <name>L-glutamine</name>
        <dbReference type="ChEBI" id="CHEBI:58359"/>
    </ligand>
</feature>
<feature type="binding site" evidence="1">
    <location>
        <begin position="75"/>
        <end position="77"/>
    </location>
    <ligand>
        <name>L-glutamine</name>
        <dbReference type="ChEBI" id="CHEBI:58359"/>
    </ligand>
</feature>
<feature type="binding site" evidence="1">
    <location>
        <position position="97"/>
    </location>
    <ligand>
        <name>L-glutamine</name>
        <dbReference type="ChEBI" id="CHEBI:58359"/>
    </ligand>
</feature>
<feature type="binding site" evidence="1">
    <location>
        <position position="256"/>
    </location>
    <ligand>
        <name>ATP</name>
        <dbReference type="ChEBI" id="CHEBI:30616"/>
    </ligand>
</feature>
<feature type="binding site" evidence="1">
    <location>
        <position position="288"/>
    </location>
    <ligand>
        <name>ATP</name>
        <dbReference type="ChEBI" id="CHEBI:30616"/>
    </ligand>
</feature>
<feature type="binding site" evidence="1">
    <location>
        <begin position="363"/>
        <end position="364"/>
    </location>
    <ligand>
        <name>ATP</name>
        <dbReference type="ChEBI" id="CHEBI:30616"/>
    </ligand>
</feature>
<feature type="site" description="Important for beta-aspartyl-AMP intermediate formation" evidence="1">
    <location>
        <position position="365"/>
    </location>
</feature>
<feature type="modified residue" description="N6-acetyllysine" evidence="2">
    <location>
        <position position="385"/>
    </location>
</feature>
<feature type="modified residue" description="Phosphothreonine" evidence="2">
    <location>
        <position position="545"/>
    </location>
</feature>
<feature type="modified residue" description="Phosphoserine" evidence="2">
    <location>
        <position position="557"/>
    </location>
</feature>
<reference key="1">
    <citation type="submission" date="2004-11" db="EMBL/GenBank/DDBJ databases">
        <authorList>
            <consortium name="The German cDNA consortium"/>
        </authorList>
    </citation>
    <scope>NUCLEOTIDE SEQUENCE [LARGE SCALE MRNA]</scope>
    <source>
        <tissue>Brain cortex</tissue>
    </source>
</reference>
<name>ASNS_PONAB</name>
<dbReference type="EC" id="6.3.5.4"/>
<dbReference type="EMBL" id="CR860360">
    <property type="protein sequence ID" value="CAH92491.1"/>
    <property type="molecule type" value="mRNA"/>
</dbReference>
<dbReference type="RefSeq" id="NP_001126469.1">
    <property type="nucleotide sequence ID" value="NM_001132997.1"/>
</dbReference>
<dbReference type="RefSeq" id="XP_009241262.1">
    <property type="nucleotide sequence ID" value="XM_009242987.1"/>
</dbReference>
<dbReference type="RefSeq" id="XP_054414965.1">
    <property type="nucleotide sequence ID" value="XM_054558990.2"/>
</dbReference>
<dbReference type="RefSeq" id="XP_054414966.1">
    <property type="nucleotide sequence ID" value="XM_054558991.1"/>
</dbReference>
<dbReference type="RefSeq" id="XP_063581616.1">
    <property type="nucleotide sequence ID" value="XM_063725546.1"/>
</dbReference>
<dbReference type="SMR" id="Q5R6W9"/>
<dbReference type="FunCoup" id="Q5R6W9">
    <property type="interactions" value="869"/>
</dbReference>
<dbReference type="STRING" id="9601.ENSPPYP00000019942"/>
<dbReference type="MEROPS" id="C44.001"/>
<dbReference type="Ensembl" id="ENSPPYT00000020728.3">
    <property type="protein sequence ID" value="ENSPPYP00000019942.2"/>
    <property type="gene ID" value="ENSPPYG00000017790.3"/>
</dbReference>
<dbReference type="GeneID" id="100173456"/>
<dbReference type="KEGG" id="pon:100173456"/>
<dbReference type="CTD" id="440"/>
<dbReference type="eggNOG" id="KOG0571">
    <property type="taxonomic scope" value="Eukaryota"/>
</dbReference>
<dbReference type="GeneTree" id="ENSGT00390000001994"/>
<dbReference type="HOGENOM" id="CLU_014658_2_1_1"/>
<dbReference type="InParanoid" id="Q5R6W9"/>
<dbReference type="OrthoDB" id="409189at2759"/>
<dbReference type="TreeFam" id="TF300603"/>
<dbReference type="UniPathway" id="UPA00134">
    <property type="reaction ID" value="UER00195"/>
</dbReference>
<dbReference type="Proteomes" id="UP000001595">
    <property type="component" value="Chromosome 7"/>
</dbReference>
<dbReference type="GO" id="GO:0005829">
    <property type="term" value="C:cytosol"/>
    <property type="evidence" value="ECO:0007669"/>
    <property type="project" value="TreeGrafter"/>
</dbReference>
<dbReference type="GO" id="GO:0004066">
    <property type="term" value="F:asparagine synthase (glutamine-hydrolyzing) activity"/>
    <property type="evidence" value="ECO:0007669"/>
    <property type="project" value="UniProtKB-EC"/>
</dbReference>
<dbReference type="GO" id="GO:0005524">
    <property type="term" value="F:ATP binding"/>
    <property type="evidence" value="ECO:0007669"/>
    <property type="project" value="UniProtKB-KW"/>
</dbReference>
<dbReference type="GO" id="GO:0070981">
    <property type="term" value="P:L-asparagine biosynthetic process"/>
    <property type="evidence" value="ECO:0007669"/>
    <property type="project" value="UniProtKB-UniPathway"/>
</dbReference>
<dbReference type="CDD" id="cd01991">
    <property type="entry name" value="Asn_synthase_B_C"/>
    <property type="match status" value="1"/>
</dbReference>
<dbReference type="CDD" id="cd00712">
    <property type="entry name" value="AsnB"/>
    <property type="match status" value="1"/>
</dbReference>
<dbReference type="FunFam" id="3.60.20.10:FF:000039">
    <property type="entry name" value="Asparagine synthetase [glutamine-hydrolyzing]"/>
    <property type="match status" value="1"/>
</dbReference>
<dbReference type="FunFam" id="3.40.50.620:FF:000090">
    <property type="entry name" value="asparagine synthetase [glutamine-hydrolyzing]"/>
    <property type="match status" value="1"/>
</dbReference>
<dbReference type="Gene3D" id="3.60.20.10">
    <property type="entry name" value="Glutamine Phosphoribosylpyrophosphate, subunit 1, domain 1"/>
    <property type="match status" value="1"/>
</dbReference>
<dbReference type="Gene3D" id="3.40.50.620">
    <property type="entry name" value="HUPs"/>
    <property type="match status" value="1"/>
</dbReference>
<dbReference type="InterPro" id="IPR006426">
    <property type="entry name" value="Asn_synth_AEB"/>
</dbReference>
<dbReference type="InterPro" id="IPR001962">
    <property type="entry name" value="Asn_synthase"/>
</dbReference>
<dbReference type="InterPro" id="IPR050795">
    <property type="entry name" value="Asn_Synthetase"/>
</dbReference>
<dbReference type="InterPro" id="IPR033738">
    <property type="entry name" value="AsnB_N"/>
</dbReference>
<dbReference type="InterPro" id="IPR017932">
    <property type="entry name" value="GATase_2_dom"/>
</dbReference>
<dbReference type="InterPro" id="IPR029055">
    <property type="entry name" value="Ntn_hydrolases_N"/>
</dbReference>
<dbReference type="InterPro" id="IPR014729">
    <property type="entry name" value="Rossmann-like_a/b/a_fold"/>
</dbReference>
<dbReference type="NCBIfam" id="TIGR01536">
    <property type="entry name" value="asn_synth_AEB"/>
    <property type="match status" value="1"/>
</dbReference>
<dbReference type="NCBIfam" id="NF006949">
    <property type="entry name" value="PRK09431.1"/>
    <property type="match status" value="1"/>
</dbReference>
<dbReference type="PANTHER" id="PTHR11772">
    <property type="entry name" value="ASPARAGINE SYNTHETASE"/>
    <property type="match status" value="1"/>
</dbReference>
<dbReference type="PANTHER" id="PTHR11772:SF36">
    <property type="entry name" value="ASPARAGINE SYNTHETASE [GLUTAMINE-HYDROLYZING]"/>
    <property type="match status" value="1"/>
</dbReference>
<dbReference type="Pfam" id="PF00733">
    <property type="entry name" value="Asn_synthase"/>
    <property type="match status" value="2"/>
</dbReference>
<dbReference type="Pfam" id="PF13537">
    <property type="entry name" value="GATase_7"/>
    <property type="match status" value="1"/>
</dbReference>
<dbReference type="PIRSF" id="PIRSF001589">
    <property type="entry name" value="Asn_synthetase_glu-h"/>
    <property type="match status" value="1"/>
</dbReference>
<dbReference type="SUPFAM" id="SSF52402">
    <property type="entry name" value="Adenine nucleotide alpha hydrolases-like"/>
    <property type="match status" value="1"/>
</dbReference>
<dbReference type="SUPFAM" id="SSF56235">
    <property type="entry name" value="N-terminal nucleophile aminohydrolases (Ntn hydrolases)"/>
    <property type="match status" value="1"/>
</dbReference>
<dbReference type="PROSITE" id="PS51278">
    <property type="entry name" value="GATASE_TYPE_2"/>
    <property type="match status" value="1"/>
</dbReference>
<keyword id="KW-0007">Acetylation</keyword>
<keyword id="KW-0028">Amino-acid biosynthesis</keyword>
<keyword id="KW-0061">Asparagine biosynthesis</keyword>
<keyword id="KW-0067">ATP-binding</keyword>
<keyword id="KW-0315">Glutamine amidotransferase</keyword>
<keyword id="KW-0436">Ligase</keyword>
<keyword id="KW-0547">Nucleotide-binding</keyword>
<keyword id="KW-0597">Phosphoprotein</keyword>
<keyword id="KW-1185">Reference proteome</keyword>
<protein>
    <recommendedName>
        <fullName>Asparagine synthetase [glutamine-hydrolyzing]</fullName>
        <ecNumber>6.3.5.4</ecNumber>
    </recommendedName>
    <alternativeName>
        <fullName>Glutamine-dependent asparagine synthetase</fullName>
    </alternativeName>
</protein>
<organism>
    <name type="scientific">Pongo abelii</name>
    <name type="common">Sumatran orangutan</name>
    <name type="synonym">Pongo pygmaeus abelii</name>
    <dbReference type="NCBI Taxonomy" id="9601"/>
    <lineage>
        <taxon>Eukaryota</taxon>
        <taxon>Metazoa</taxon>
        <taxon>Chordata</taxon>
        <taxon>Craniata</taxon>
        <taxon>Vertebrata</taxon>
        <taxon>Euteleostomi</taxon>
        <taxon>Mammalia</taxon>
        <taxon>Eutheria</taxon>
        <taxon>Euarchontoglires</taxon>
        <taxon>Primates</taxon>
        <taxon>Haplorrhini</taxon>
        <taxon>Catarrhini</taxon>
        <taxon>Hominidae</taxon>
        <taxon>Pongo</taxon>
    </lineage>
</organism>
<proteinExistence type="evidence at transcript level"/>
<gene>
    <name type="primary">ASNS</name>
</gene>
<evidence type="ECO:0000250" key="1"/>
<evidence type="ECO:0000250" key="2">
    <source>
        <dbReference type="UniProtKB" id="P08243"/>
    </source>
</evidence>
<evidence type="ECO:0000255" key="3">
    <source>
        <dbReference type="PROSITE-ProRule" id="PRU00609"/>
    </source>
</evidence>
<accession>Q5R6W9</accession>
<comment type="catalytic activity">
    <reaction>
        <text>L-aspartate + L-glutamine + ATP + H2O = L-asparagine + L-glutamate + AMP + diphosphate + H(+)</text>
        <dbReference type="Rhea" id="RHEA:12228"/>
        <dbReference type="ChEBI" id="CHEBI:15377"/>
        <dbReference type="ChEBI" id="CHEBI:15378"/>
        <dbReference type="ChEBI" id="CHEBI:29985"/>
        <dbReference type="ChEBI" id="CHEBI:29991"/>
        <dbReference type="ChEBI" id="CHEBI:30616"/>
        <dbReference type="ChEBI" id="CHEBI:33019"/>
        <dbReference type="ChEBI" id="CHEBI:58048"/>
        <dbReference type="ChEBI" id="CHEBI:58359"/>
        <dbReference type="ChEBI" id="CHEBI:456215"/>
        <dbReference type="EC" id="6.3.5.4"/>
    </reaction>
</comment>
<comment type="pathway">
    <text>Amino-acid biosynthesis; L-asparagine biosynthesis; L-asparagine from L-aspartate (L-Gln route): step 1/1.</text>
</comment>